<reference key="1">
    <citation type="journal article" date="2007" name="Proc. Natl. Acad. Sci. U.S.A.">
        <title>Genome sequencing and comparative analysis of Saccharomyces cerevisiae strain YJM789.</title>
        <authorList>
            <person name="Wei W."/>
            <person name="McCusker J.H."/>
            <person name="Hyman R.W."/>
            <person name="Jones T."/>
            <person name="Ning Y."/>
            <person name="Cao Z."/>
            <person name="Gu Z."/>
            <person name="Bruno D."/>
            <person name="Miranda M."/>
            <person name="Nguyen M."/>
            <person name="Wilhelmy J."/>
            <person name="Komp C."/>
            <person name="Tamse R."/>
            <person name="Wang X."/>
            <person name="Jia P."/>
            <person name="Luedi P."/>
            <person name="Oefner P.J."/>
            <person name="David L."/>
            <person name="Dietrich F.S."/>
            <person name="Li Y."/>
            <person name="Davis R.W."/>
            <person name="Steinmetz L.M."/>
        </authorList>
    </citation>
    <scope>NUCLEOTIDE SEQUENCE [LARGE SCALE GENOMIC DNA]</scope>
    <source>
        <strain>YJM789</strain>
    </source>
</reference>
<protein>
    <recommendedName>
        <fullName>Pre-mRNA-splicing factor SPP381</fullName>
    </recommendedName>
    <alternativeName>
        <fullName>Suppressor of PRP38-1 mutation</fullName>
    </alternativeName>
</protein>
<proteinExistence type="inferred from homology"/>
<comment type="function">
    <text evidence="1">Component of the spliceosome and rRNA processing machinery. In association with the spliceosomal U4/U6.U5 tri-snRNP particle, required for splicing of pre-mRNA (By similarity).</text>
</comment>
<comment type="subunit">
    <text evidence="1">Component of the 25S U4/U6.U5 tri-snRNP particle, a subcomplex of the spliceosome. Interacts with PRP38 (By similarity).</text>
</comment>
<comment type="subcellular location">
    <subcellularLocation>
        <location evidence="1">Nucleus</location>
    </subcellularLocation>
</comment>
<comment type="similarity">
    <text evidence="3">Belongs to the SPP381 family.</text>
</comment>
<keyword id="KW-0507">mRNA processing</keyword>
<keyword id="KW-0508">mRNA splicing</keyword>
<keyword id="KW-0539">Nucleus</keyword>
<keyword id="KW-0687">Ribonucleoprotein</keyword>
<keyword id="KW-0694">RNA-binding</keyword>
<keyword id="KW-0747">Spliceosome</keyword>
<dbReference type="EMBL" id="AAFW02000011">
    <property type="protein sequence ID" value="EDN64763.1"/>
    <property type="molecule type" value="Genomic_DNA"/>
</dbReference>
<dbReference type="SMR" id="A6ZL94"/>
<dbReference type="HOGENOM" id="CLU_1107827_0_0_1"/>
<dbReference type="OrthoDB" id="42116at4893"/>
<dbReference type="Proteomes" id="UP000007060">
    <property type="component" value="Unassembled WGS sequence"/>
</dbReference>
<dbReference type="GO" id="GO:0005681">
    <property type="term" value="C:spliceosomal complex"/>
    <property type="evidence" value="ECO:0007669"/>
    <property type="project" value="UniProtKB-KW"/>
</dbReference>
<dbReference type="GO" id="GO:0003723">
    <property type="term" value="F:RNA binding"/>
    <property type="evidence" value="ECO:0007669"/>
    <property type="project" value="UniProtKB-KW"/>
</dbReference>
<dbReference type="GO" id="GO:0006397">
    <property type="term" value="P:mRNA processing"/>
    <property type="evidence" value="ECO:0007669"/>
    <property type="project" value="UniProtKB-KW"/>
</dbReference>
<dbReference type="GO" id="GO:0008380">
    <property type="term" value="P:RNA splicing"/>
    <property type="evidence" value="ECO:0007669"/>
    <property type="project" value="UniProtKB-KW"/>
</dbReference>
<sequence>MSFRHFKRRLDTSSADESSSADEEHPDQNVSLTEKSTSLSHSDLGGEILNDTGKNRTPNDGQESNESDESPESEESSDNSDSSDSDDMRPLPRPLFMKKKANNLQKATKIDQPWNTQDDARVLQTKKENMIKNIDKANQVAKNYETMKLRLNTNYSTNEELIKQCMLLDDNDEVDSEKERQKWFERQNERKQKHRRIQLAKQRESEEYEAKRFEAM</sequence>
<accession>A6ZL94</accession>
<name>SP381_YEAS7</name>
<gene>
    <name type="primary">SPP381</name>
    <name type="ORF">SCY_0364</name>
</gene>
<evidence type="ECO:0000250" key="1"/>
<evidence type="ECO:0000256" key="2">
    <source>
        <dbReference type="SAM" id="MobiDB-lite"/>
    </source>
</evidence>
<evidence type="ECO:0000305" key="3"/>
<feature type="chain" id="PRO_0000324508" description="Pre-mRNA-splicing factor SPP381">
    <location>
        <begin position="1"/>
        <end position="216"/>
    </location>
</feature>
<feature type="region of interest" description="Disordered" evidence="2">
    <location>
        <begin position="1"/>
        <end position="93"/>
    </location>
</feature>
<feature type="region of interest" description="Disordered" evidence="2">
    <location>
        <begin position="172"/>
        <end position="216"/>
    </location>
</feature>
<feature type="compositionally biased region" description="Polar residues" evidence="2">
    <location>
        <begin position="28"/>
        <end position="41"/>
    </location>
</feature>
<feature type="compositionally biased region" description="Acidic residues" evidence="2">
    <location>
        <begin position="63"/>
        <end position="85"/>
    </location>
</feature>
<feature type="compositionally biased region" description="Basic and acidic residues" evidence="2">
    <location>
        <begin position="177"/>
        <end position="190"/>
    </location>
</feature>
<feature type="compositionally biased region" description="Basic and acidic residues" evidence="2">
    <location>
        <begin position="201"/>
        <end position="216"/>
    </location>
</feature>
<organism>
    <name type="scientific">Saccharomyces cerevisiae (strain YJM789)</name>
    <name type="common">Baker's yeast</name>
    <dbReference type="NCBI Taxonomy" id="307796"/>
    <lineage>
        <taxon>Eukaryota</taxon>
        <taxon>Fungi</taxon>
        <taxon>Dikarya</taxon>
        <taxon>Ascomycota</taxon>
        <taxon>Saccharomycotina</taxon>
        <taxon>Saccharomycetes</taxon>
        <taxon>Saccharomycetales</taxon>
        <taxon>Saccharomycetaceae</taxon>
        <taxon>Saccharomyces</taxon>
    </lineage>
</organism>